<organism>
    <name type="scientific">Limosilactobacillus fermentum (strain NBRC 3956 / LMG 18251)</name>
    <name type="common">Lactobacillus fermentum</name>
    <dbReference type="NCBI Taxonomy" id="334390"/>
    <lineage>
        <taxon>Bacteria</taxon>
        <taxon>Bacillati</taxon>
        <taxon>Bacillota</taxon>
        <taxon>Bacilli</taxon>
        <taxon>Lactobacillales</taxon>
        <taxon>Lactobacillaceae</taxon>
        <taxon>Limosilactobacillus</taxon>
    </lineage>
</organism>
<feature type="chain" id="PRO_1000187966" description="Ribonuclease Z">
    <location>
        <begin position="1"/>
        <end position="310"/>
    </location>
</feature>
<feature type="active site" description="Proton acceptor" evidence="1">
    <location>
        <position position="67"/>
    </location>
</feature>
<feature type="binding site" evidence="1">
    <location>
        <position position="63"/>
    </location>
    <ligand>
        <name>Zn(2+)</name>
        <dbReference type="ChEBI" id="CHEBI:29105"/>
        <label>1</label>
        <note>catalytic</note>
    </ligand>
</feature>
<feature type="binding site" evidence="1">
    <location>
        <position position="65"/>
    </location>
    <ligand>
        <name>Zn(2+)</name>
        <dbReference type="ChEBI" id="CHEBI:29105"/>
        <label>1</label>
        <note>catalytic</note>
    </ligand>
</feature>
<feature type="binding site" evidence="1">
    <location>
        <position position="67"/>
    </location>
    <ligand>
        <name>Zn(2+)</name>
        <dbReference type="ChEBI" id="CHEBI:29105"/>
        <label>2</label>
        <note>catalytic</note>
    </ligand>
</feature>
<feature type="binding site" evidence="1">
    <location>
        <position position="68"/>
    </location>
    <ligand>
        <name>Zn(2+)</name>
        <dbReference type="ChEBI" id="CHEBI:29105"/>
        <label>2</label>
        <note>catalytic</note>
    </ligand>
</feature>
<feature type="binding site" evidence="1">
    <location>
        <position position="141"/>
    </location>
    <ligand>
        <name>Zn(2+)</name>
        <dbReference type="ChEBI" id="CHEBI:29105"/>
        <label>1</label>
        <note>catalytic</note>
    </ligand>
</feature>
<feature type="binding site" evidence="1">
    <location>
        <position position="212"/>
    </location>
    <ligand>
        <name>Zn(2+)</name>
        <dbReference type="ChEBI" id="CHEBI:29105"/>
        <label>1</label>
        <note>catalytic</note>
    </ligand>
</feature>
<feature type="binding site" evidence="1">
    <location>
        <position position="212"/>
    </location>
    <ligand>
        <name>Zn(2+)</name>
        <dbReference type="ChEBI" id="CHEBI:29105"/>
        <label>2</label>
        <note>catalytic</note>
    </ligand>
</feature>
<feature type="binding site" evidence="1">
    <location>
        <position position="270"/>
    </location>
    <ligand>
        <name>Zn(2+)</name>
        <dbReference type="ChEBI" id="CHEBI:29105"/>
        <label>2</label>
        <note>catalytic</note>
    </ligand>
</feature>
<sequence>MQIEFLGTGAGSPSKQRNVSSLALRLLEERNAIWLFDCGEATQHQILHTTIRPRKVEKIFITHLHGDHIFGLPGFLSSRSFQGGDEPLTIYGPKGIKDFVQTALKVSESRLSYPLKFVELTGDGEVFKDQTFTVTARRLDHKIASFGYRVEEAAHPGELMVEKVRQAGIPSGPLYGQLKRGEVVTLPDGRTVDGHDFIGAPQPGRIVAILGDTRVTDNAVKLAKGADVLVHEATFAKNEQRLAHNYYHSTSVQAATVAKKAGAQRLLLNHISARYVGRYANELAYQVRDIFEQTRVVNDLDVIEIPFKER</sequence>
<reference key="1">
    <citation type="journal article" date="2008" name="DNA Res.">
        <title>Comparative genome analysis of Lactobacillus reuteri and Lactobacillus fermentum reveal a genomic island for reuterin and cobalamin production.</title>
        <authorList>
            <person name="Morita H."/>
            <person name="Toh H."/>
            <person name="Fukuda S."/>
            <person name="Horikawa H."/>
            <person name="Oshima K."/>
            <person name="Suzuki T."/>
            <person name="Murakami M."/>
            <person name="Hisamatsu S."/>
            <person name="Kato Y."/>
            <person name="Takizawa T."/>
            <person name="Fukuoka H."/>
            <person name="Yoshimura T."/>
            <person name="Itoh K."/>
            <person name="O'Sullivan D.J."/>
            <person name="McKay L.L."/>
            <person name="Ohno H."/>
            <person name="Kikuchi J."/>
            <person name="Masaoka T."/>
            <person name="Hattori M."/>
        </authorList>
    </citation>
    <scope>NUCLEOTIDE SEQUENCE [LARGE SCALE GENOMIC DNA]</scope>
    <source>
        <strain>NBRC 3956 / LMG 18251</strain>
    </source>
</reference>
<name>RNZ_LIMF3</name>
<protein>
    <recommendedName>
        <fullName evidence="1">Ribonuclease Z</fullName>
        <shortName evidence="1">RNase Z</shortName>
        <ecNumber evidence="1">3.1.26.11</ecNumber>
    </recommendedName>
    <alternativeName>
        <fullName evidence="1">tRNA 3 endonuclease</fullName>
    </alternativeName>
    <alternativeName>
        <fullName evidence="1">tRNase Z</fullName>
    </alternativeName>
</protein>
<gene>
    <name evidence="1" type="primary">rnz</name>
    <name type="ordered locus">LAF_0627</name>
</gene>
<proteinExistence type="inferred from homology"/>
<keyword id="KW-0255">Endonuclease</keyword>
<keyword id="KW-0378">Hydrolase</keyword>
<keyword id="KW-0479">Metal-binding</keyword>
<keyword id="KW-0540">Nuclease</keyword>
<keyword id="KW-1185">Reference proteome</keyword>
<keyword id="KW-0819">tRNA processing</keyword>
<keyword id="KW-0862">Zinc</keyword>
<evidence type="ECO:0000255" key="1">
    <source>
        <dbReference type="HAMAP-Rule" id="MF_01818"/>
    </source>
</evidence>
<accession>B2GBD1</accession>
<comment type="function">
    <text evidence="1">Zinc phosphodiesterase, which displays some tRNA 3'-processing endonuclease activity. Probably involved in tRNA maturation, by removing a 3'-trailer from precursor tRNA.</text>
</comment>
<comment type="catalytic activity">
    <reaction evidence="1">
        <text>Endonucleolytic cleavage of RNA, removing extra 3' nucleotides from tRNA precursor, generating 3' termini of tRNAs. A 3'-hydroxy group is left at the tRNA terminus and a 5'-phosphoryl group is left at the trailer molecule.</text>
        <dbReference type="EC" id="3.1.26.11"/>
    </reaction>
</comment>
<comment type="cofactor">
    <cofactor evidence="1">
        <name>Zn(2+)</name>
        <dbReference type="ChEBI" id="CHEBI:29105"/>
    </cofactor>
    <text evidence="1">Binds 2 Zn(2+) ions.</text>
</comment>
<comment type="subunit">
    <text evidence="1">Homodimer.</text>
</comment>
<comment type="similarity">
    <text evidence="1">Belongs to the RNase Z family.</text>
</comment>
<dbReference type="EC" id="3.1.26.11" evidence="1"/>
<dbReference type="EMBL" id="AP008937">
    <property type="protein sequence ID" value="BAG26963.1"/>
    <property type="molecule type" value="Genomic_DNA"/>
</dbReference>
<dbReference type="RefSeq" id="WP_012391023.1">
    <property type="nucleotide sequence ID" value="NC_010610.1"/>
</dbReference>
<dbReference type="SMR" id="B2GBD1"/>
<dbReference type="KEGG" id="lfe:LAF_0627"/>
<dbReference type="PATRIC" id="fig|334390.5.peg.673"/>
<dbReference type="eggNOG" id="COG1234">
    <property type="taxonomic scope" value="Bacteria"/>
</dbReference>
<dbReference type="HOGENOM" id="CLU_031317_2_0_9"/>
<dbReference type="Proteomes" id="UP000001697">
    <property type="component" value="Chromosome"/>
</dbReference>
<dbReference type="GO" id="GO:0042781">
    <property type="term" value="F:3'-tRNA processing endoribonuclease activity"/>
    <property type="evidence" value="ECO:0007669"/>
    <property type="project" value="UniProtKB-UniRule"/>
</dbReference>
<dbReference type="GO" id="GO:0008270">
    <property type="term" value="F:zinc ion binding"/>
    <property type="evidence" value="ECO:0007669"/>
    <property type="project" value="UniProtKB-UniRule"/>
</dbReference>
<dbReference type="CDD" id="cd07717">
    <property type="entry name" value="RNaseZ_ZiPD-like_MBL-fold"/>
    <property type="match status" value="1"/>
</dbReference>
<dbReference type="FunFam" id="3.60.15.10:FF:000002">
    <property type="entry name" value="Ribonuclease Z"/>
    <property type="match status" value="1"/>
</dbReference>
<dbReference type="Gene3D" id="3.60.15.10">
    <property type="entry name" value="Ribonuclease Z/Hydroxyacylglutathione hydrolase-like"/>
    <property type="match status" value="1"/>
</dbReference>
<dbReference type="HAMAP" id="MF_01818">
    <property type="entry name" value="RNase_Z_BN"/>
    <property type="match status" value="1"/>
</dbReference>
<dbReference type="InterPro" id="IPR001279">
    <property type="entry name" value="Metallo-B-lactamas"/>
</dbReference>
<dbReference type="InterPro" id="IPR036866">
    <property type="entry name" value="RibonucZ/Hydroxyglut_hydro"/>
</dbReference>
<dbReference type="InterPro" id="IPR013471">
    <property type="entry name" value="RNase_Z/BN"/>
</dbReference>
<dbReference type="NCBIfam" id="NF000801">
    <property type="entry name" value="PRK00055.1-3"/>
    <property type="match status" value="1"/>
</dbReference>
<dbReference type="NCBIfam" id="TIGR02651">
    <property type="entry name" value="RNase_Z"/>
    <property type="match status" value="1"/>
</dbReference>
<dbReference type="PANTHER" id="PTHR46018">
    <property type="entry name" value="ZINC PHOSPHODIESTERASE ELAC PROTEIN 1"/>
    <property type="match status" value="1"/>
</dbReference>
<dbReference type="PANTHER" id="PTHR46018:SF2">
    <property type="entry name" value="ZINC PHOSPHODIESTERASE ELAC PROTEIN 1"/>
    <property type="match status" value="1"/>
</dbReference>
<dbReference type="Pfam" id="PF12706">
    <property type="entry name" value="Lactamase_B_2"/>
    <property type="match status" value="2"/>
</dbReference>
<dbReference type="SMART" id="SM00849">
    <property type="entry name" value="Lactamase_B"/>
    <property type="match status" value="1"/>
</dbReference>
<dbReference type="SUPFAM" id="SSF56281">
    <property type="entry name" value="Metallo-hydrolase/oxidoreductase"/>
    <property type="match status" value="1"/>
</dbReference>